<reference key="1">
    <citation type="journal article" date="2000" name="Nature">
        <title>Ancestral chloroplast genome in Mesostigma viride reveals an early branch of green plant evolution.</title>
        <authorList>
            <person name="Lemieux C."/>
            <person name="Otis C."/>
            <person name="Turmel M."/>
        </authorList>
    </citation>
    <scope>NUCLEOTIDE SEQUENCE [LARGE SCALE GENOMIC DNA]</scope>
    <source>
        <strain>NIES-296 / KY-14 / CCMP 2046</strain>
    </source>
</reference>
<accession>Q9MUT8</accession>
<comment type="function">
    <text evidence="1">Binds to 23S rRNA.</text>
</comment>
<comment type="subunit">
    <text evidence="1">Part of the 50S ribosomal subunit.</text>
</comment>
<comment type="subcellular location">
    <subcellularLocation>
        <location>Plastid</location>
        <location>Chloroplast</location>
    </subcellularLocation>
</comment>
<comment type="similarity">
    <text evidence="2">Belongs to the universal ribosomal protein uL23 family.</text>
</comment>
<dbReference type="EMBL" id="AF166114">
    <property type="protein sequence ID" value="AAF43813.1"/>
    <property type="molecule type" value="Genomic_DNA"/>
</dbReference>
<dbReference type="RefSeq" id="NP_038372.1">
    <property type="nucleotide sequence ID" value="NC_002186.1"/>
</dbReference>
<dbReference type="SMR" id="Q9MUT8"/>
<dbReference type="GeneID" id="800967"/>
<dbReference type="GO" id="GO:0009507">
    <property type="term" value="C:chloroplast"/>
    <property type="evidence" value="ECO:0007669"/>
    <property type="project" value="UniProtKB-SubCell"/>
</dbReference>
<dbReference type="GO" id="GO:1990904">
    <property type="term" value="C:ribonucleoprotein complex"/>
    <property type="evidence" value="ECO:0007669"/>
    <property type="project" value="UniProtKB-KW"/>
</dbReference>
<dbReference type="GO" id="GO:0005840">
    <property type="term" value="C:ribosome"/>
    <property type="evidence" value="ECO:0007669"/>
    <property type="project" value="UniProtKB-KW"/>
</dbReference>
<dbReference type="GO" id="GO:0019843">
    <property type="term" value="F:rRNA binding"/>
    <property type="evidence" value="ECO:0007669"/>
    <property type="project" value="UniProtKB-UniRule"/>
</dbReference>
<dbReference type="GO" id="GO:0003735">
    <property type="term" value="F:structural constituent of ribosome"/>
    <property type="evidence" value="ECO:0007669"/>
    <property type="project" value="InterPro"/>
</dbReference>
<dbReference type="GO" id="GO:0006412">
    <property type="term" value="P:translation"/>
    <property type="evidence" value="ECO:0007669"/>
    <property type="project" value="UniProtKB-UniRule"/>
</dbReference>
<dbReference type="FunFam" id="3.30.70.330:FF:000001">
    <property type="entry name" value="50S ribosomal protein L23"/>
    <property type="match status" value="1"/>
</dbReference>
<dbReference type="Gene3D" id="3.30.70.330">
    <property type="match status" value="1"/>
</dbReference>
<dbReference type="HAMAP" id="MF_01369_B">
    <property type="entry name" value="Ribosomal_uL23_B"/>
    <property type="match status" value="1"/>
</dbReference>
<dbReference type="InterPro" id="IPR012677">
    <property type="entry name" value="Nucleotide-bd_a/b_plait_sf"/>
</dbReference>
<dbReference type="InterPro" id="IPR013025">
    <property type="entry name" value="Ribosomal_uL23-like"/>
</dbReference>
<dbReference type="InterPro" id="IPR012678">
    <property type="entry name" value="Ribosomal_uL23/eL15/eS24_sf"/>
</dbReference>
<dbReference type="NCBIfam" id="NF004363">
    <property type="entry name" value="PRK05738.2-4"/>
    <property type="match status" value="1"/>
</dbReference>
<dbReference type="NCBIfam" id="NF004368">
    <property type="entry name" value="PRK05738.3-4"/>
    <property type="match status" value="1"/>
</dbReference>
<dbReference type="PANTHER" id="PTHR11620">
    <property type="entry name" value="60S RIBOSOMAL PROTEIN L23A"/>
    <property type="match status" value="1"/>
</dbReference>
<dbReference type="Pfam" id="PF00276">
    <property type="entry name" value="Ribosomal_L23"/>
    <property type="match status" value="1"/>
</dbReference>
<dbReference type="SUPFAM" id="SSF54189">
    <property type="entry name" value="Ribosomal proteins S24e, L23 and L15e"/>
    <property type="match status" value="1"/>
</dbReference>
<gene>
    <name type="primary">rpl23</name>
</gene>
<name>RK23_MESVI</name>
<proteinExistence type="inferred from homology"/>
<geneLocation type="chloroplast"/>
<keyword id="KW-0150">Chloroplast</keyword>
<keyword id="KW-0934">Plastid</keyword>
<keyword id="KW-0687">Ribonucleoprotein</keyword>
<keyword id="KW-0689">Ribosomal protein</keyword>
<keyword id="KW-0694">RNA-binding</keyword>
<keyword id="KW-0699">rRNA-binding</keyword>
<organism>
    <name type="scientific">Mesostigma viride</name>
    <name type="common">Green alga</name>
    <dbReference type="NCBI Taxonomy" id="41882"/>
    <lineage>
        <taxon>Eukaryota</taxon>
        <taxon>Viridiplantae</taxon>
        <taxon>Streptophyta</taxon>
        <taxon>Mesostigmatophyceae</taxon>
        <taxon>Mesostigmatales</taxon>
        <taxon>Mesostigmataceae</taxon>
        <taxon>Mesostigma</taxon>
    </lineage>
</organism>
<protein>
    <recommendedName>
        <fullName evidence="2">Large ribosomal subunit protein uL23c</fullName>
    </recommendedName>
    <alternativeName>
        <fullName>50S ribosomal protein L23, chloroplastic</fullName>
    </alternativeName>
</protein>
<evidence type="ECO:0000250" key="1"/>
<evidence type="ECO:0000305" key="2"/>
<sequence length="92" mass="10715">MIDIVKYPVLTEKATRLLENNQYTFDVDPKANKITIKALIEDFFNVKVLSVNTHRPPRKKRRIGRSEGYRPNYKRVIVTLKTGDSIKLLPET</sequence>
<feature type="chain" id="PRO_0000129455" description="Large ribosomal subunit protein uL23c">
    <location>
        <begin position="1"/>
        <end position="92"/>
    </location>
</feature>